<evidence type="ECO:0000255" key="1">
    <source>
        <dbReference type="HAMAP-Rule" id="MF_00190"/>
    </source>
</evidence>
<gene>
    <name evidence="1" type="primary">clsA</name>
    <name type="synonym">cls</name>
    <name type="ordered locus">EC55989_1346</name>
</gene>
<accession>B7LHJ4</accession>
<sequence>MTTVYTLVSWLAILGYWLLIAGVTLRILMKRRAVPSAMAWLLIIYILPLVGIIAYLAVGELHLGKRRAERARAMWPSTAKWLNDLKACKHIFAEENSSVAAPLFKLCERRQGIAGVKGNQLQLMTESDDVMQALIRDIQLARHNIEMVFYIWQPGGMADQVAESLMAAARRGIHCRLMLDSAGSVAFFRSPWPELMRNAGIEVVEALKVNLMRVFLRRMDLRQHRKMIMIDNYIAYTGSMNMVDPRYFKQDAGVGQWIDLMARMEGPIATAMGIIYSCDWEIETGKRILPPPPDVNIMPFEQASGHTIHTIASGPGFPEDLIHQALLTAAYSAREYLIMTTPYFVPSDDLLHAICTAAQRGVDVSIILPRKNDSMLVGWASRAFFTELLAAGVKIYQFEGGLLHTKSVLVDGELSLVGTVNLDMRSLWLNFEITLAIDDKGFGADLAAVQDDYISRSRLLDARLWLKRPLWQRVAERLFYFFSPLL</sequence>
<protein>
    <recommendedName>
        <fullName evidence="1">Cardiolipin synthase A</fullName>
        <shortName evidence="1">CL synthase</shortName>
        <ecNumber evidence="1">2.7.8.-</ecNumber>
    </recommendedName>
</protein>
<name>CLSA_ECO55</name>
<feature type="chain" id="PRO_1000124267" description="Cardiolipin synthase A">
    <location>
        <begin position="1"/>
        <end position="486"/>
    </location>
</feature>
<feature type="transmembrane region" description="Helical" evidence="1">
    <location>
        <begin position="3"/>
        <end position="23"/>
    </location>
</feature>
<feature type="transmembrane region" description="Helical" evidence="1">
    <location>
        <begin position="38"/>
        <end position="58"/>
    </location>
</feature>
<feature type="domain" description="PLD phosphodiesterase 1" evidence="1">
    <location>
        <begin position="219"/>
        <end position="246"/>
    </location>
</feature>
<feature type="domain" description="PLD phosphodiesterase 2" evidence="1">
    <location>
        <begin position="399"/>
        <end position="426"/>
    </location>
</feature>
<feature type="active site" evidence="1">
    <location>
        <position position="224"/>
    </location>
</feature>
<feature type="active site" evidence="1">
    <location>
        <position position="226"/>
    </location>
</feature>
<feature type="active site" evidence="1">
    <location>
        <position position="231"/>
    </location>
</feature>
<feature type="active site" evidence="1">
    <location>
        <position position="404"/>
    </location>
</feature>
<feature type="active site" evidence="1">
    <location>
        <position position="406"/>
    </location>
</feature>
<feature type="active site" evidence="1">
    <location>
        <position position="411"/>
    </location>
</feature>
<keyword id="KW-0997">Cell inner membrane</keyword>
<keyword id="KW-1003">Cell membrane</keyword>
<keyword id="KW-0444">Lipid biosynthesis</keyword>
<keyword id="KW-0443">Lipid metabolism</keyword>
<keyword id="KW-0472">Membrane</keyword>
<keyword id="KW-0594">Phospholipid biosynthesis</keyword>
<keyword id="KW-1208">Phospholipid metabolism</keyword>
<keyword id="KW-1185">Reference proteome</keyword>
<keyword id="KW-0677">Repeat</keyword>
<keyword id="KW-0808">Transferase</keyword>
<keyword id="KW-0812">Transmembrane</keyword>
<keyword id="KW-1133">Transmembrane helix</keyword>
<comment type="function">
    <text evidence="1">Catalyzes the reversible phosphatidyl group transfer from one phosphatidylglycerol molecule to another to form cardiolipin (CL) (diphosphatidylglycerol) and glycerol.</text>
</comment>
<comment type="catalytic activity">
    <reaction evidence="1">
        <text>2 a 1,2-diacyl-sn-glycero-3-phospho-(1'-sn-glycerol) = a cardiolipin + glycerol</text>
        <dbReference type="Rhea" id="RHEA:31451"/>
        <dbReference type="ChEBI" id="CHEBI:17754"/>
        <dbReference type="ChEBI" id="CHEBI:62237"/>
        <dbReference type="ChEBI" id="CHEBI:64716"/>
    </reaction>
</comment>
<comment type="subcellular location">
    <subcellularLocation>
        <location evidence="1">Cell inner membrane</location>
        <topology evidence="1">Multi-pass membrane protein</topology>
    </subcellularLocation>
</comment>
<comment type="similarity">
    <text evidence="1">Belongs to the phospholipase D family. Cardiolipin synthase subfamily. ClsA sub-subfamily.</text>
</comment>
<reference key="1">
    <citation type="journal article" date="2009" name="PLoS Genet.">
        <title>Organised genome dynamics in the Escherichia coli species results in highly diverse adaptive paths.</title>
        <authorList>
            <person name="Touchon M."/>
            <person name="Hoede C."/>
            <person name="Tenaillon O."/>
            <person name="Barbe V."/>
            <person name="Baeriswyl S."/>
            <person name="Bidet P."/>
            <person name="Bingen E."/>
            <person name="Bonacorsi S."/>
            <person name="Bouchier C."/>
            <person name="Bouvet O."/>
            <person name="Calteau A."/>
            <person name="Chiapello H."/>
            <person name="Clermont O."/>
            <person name="Cruveiller S."/>
            <person name="Danchin A."/>
            <person name="Diard M."/>
            <person name="Dossat C."/>
            <person name="Karoui M.E."/>
            <person name="Frapy E."/>
            <person name="Garry L."/>
            <person name="Ghigo J.M."/>
            <person name="Gilles A.M."/>
            <person name="Johnson J."/>
            <person name="Le Bouguenec C."/>
            <person name="Lescat M."/>
            <person name="Mangenot S."/>
            <person name="Martinez-Jehanne V."/>
            <person name="Matic I."/>
            <person name="Nassif X."/>
            <person name="Oztas S."/>
            <person name="Petit M.A."/>
            <person name="Pichon C."/>
            <person name="Rouy Z."/>
            <person name="Ruf C.S."/>
            <person name="Schneider D."/>
            <person name="Tourret J."/>
            <person name="Vacherie B."/>
            <person name="Vallenet D."/>
            <person name="Medigue C."/>
            <person name="Rocha E.P.C."/>
            <person name="Denamur E."/>
        </authorList>
    </citation>
    <scope>NUCLEOTIDE SEQUENCE [LARGE SCALE GENOMIC DNA]</scope>
    <source>
        <strain>55989 / EAEC</strain>
    </source>
</reference>
<organism>
    <name type="scientific">Escherichia coli (strain 55989 / EAEC)</name>
    <dbReference type="NCBI Taxonomy" id="585055"/>
    <lineage>
        <taxon>Bacteria</taxon>
        <taxon>Pseudomonadati</taxon>
        <taxon>Pseudomonadota</taxon>
        <taxon>Gammaproteobacteria</taxon>
        <taxon>Enterobacterales</taxon>
        <taxon>Enterobacteriaceae</taxon>
        <taxon>Escherichia</taxon>
    </lineage>
</organism>
<proteinExistence type="inferred from homology"/>
<dbReference type="EC" id="2.7.8.-" evidence="1"/>
<dbReference type="EMBL" id="CU928145">
    <property type="protein sequence ID" value="CAU97204.1"/>
    <property type="molecule type" value="Genomic_DNA"/>
</dbReference>
<dbReference type="RefSeq" id="WP_000214516.1">
    <property type="nucleotide sequence ID" value="NZ_CP028304.1"/>
</dbReference>
<dbReference type="SMR" id="B7LHJ4"/>
<dbReference type="GeneID" id="93775314"/>
<dbReference type="KEGG" id="eck:EC55989_1346"/>
<dbReference type="HOGENOM" id="CLU_038053_1_0_6"/>
<dbReference type="Proteomes" id="UP000000746">
    <property type="component" value="Chromosome"/>
</dbReference>
<dbReference type="GO" id="GO:0005886">
    <property type="term" value="C:plasma membrane"/>
    <property type="evidence" value="ECO:0007669"/>
    <property type="project" value="UniProtKB-SubCell"/>
</dbReference>
<dbReference type="GO" id="GO:0008808">
    <property type="term" value="F:cardiolipin synthase activity"/>
    <property type="evidence" value="ECO:0007669"/>
    <property type="project" value="InterPro"/>
</dbReference>
<dbReference type="GO" id="GO:0032049">
    <property type="term" value="P:cardiolipin biosynthetic process"/>
    <property type="evidence" value="ECO:0007669"/>
    <property type="project" value="InterPro"/>
</dbReference>
<dbReference type="CDD" id="cd09152">
    <property type="entry name" value="PLDc_EcCLS_like_1"/>
    <property type="match status" value="1"/>
</dbReference>
<dbReference type="CDD" id="cd09158">
    <property type="entry name" value="PLDc_EcCLS_like_2"/>
    <property type="match status" value="1"/>
</dbReference>
<dbReference type="FunFam" id="3.30.870.10:FF:000002">
    <property type="entry name" value="Cardiolipin synthase A"/>
    <property type="match status" value="1"/>
</dbReference>
<dbReference type="FunFam" id="3.30.870.10:FF:000003">
    <property type="entry name" value="Cardiolipin synthase A"/>
    <property type="match status" value="1"/>
</dbReference>
<dbReference type="Gene3D" id="3.30.870.10">
    <property type="entry name" value="Endonuclease Chain A"/>
    <property type="match status" value="2"/>
</dbReference>
<dbReference type="HAMAP" id="MF_00190">
    <property type="entry name" value="Cardiolipin_synth_ClsA"/>
    <property type="match status" value="1"/>
</dbReference>
<dbReference type="InterPro" id="IPR022924">
    <property type="entry name" value="Cardiolipin_synthase"/>
</dbReference>
<dbReference type="InterPro" id="IPR030840">
    <property type="entry name" value="CL_synthase_A"/>
</dbReference>
<dbReference type="InterPro" id="IPR027379">
    <property type="entry name" value="CLS_N"/>
</dbReference>
<dbReference type="InterPro" id="IPR025202">
    <property type="entry name" value="PLD-like_dom"/>
</dbReference>
<dbReference type="InterPro" id="IPR001736">
    <property type="entry name" value="PLipase_D/transphosphatidylase"/>
</dbReference>
<dbReference type="NCBIfam" id="TIGR04265">
    <property type="entry name" value="bac_cardiolipin"/>
    <property type="match status" value="1"/>
</dbReference>
<dbReference type="PANTHER" id="PTHR21248">
    <property type="entry name" value="CARDIOLIPIN SYNTHASE"/>
    <property type="match status" value="1"/>
</dbReference>
<dbReference type="PANTHER" id="PTHR21248:SF22">
    <property type="entry name" value="PHOSPHOLIPASE D"/>
    <property type="match status" value="1"/>
</dbReference>
<dbReference type="Pfam" id="PF13091">
    <property type="entry name" value="PLDc_2"/>
    <property type="match status" value="2"/>
</dbReference>
<dbReference type="Pfam" id="PF13396">
    <property type="entry name" value="PLDc_N"/>
    <property type="match status" value="1"/>
</dbReference>
<dbReference type="SMART" id="SM00155">
    <property type="entry name" value="PLDc"/>
    <property type="match status" value="2"/>
</dbReference>
<dbReference type="SUPFAM" id="SSF56024">
    <property type="entry name" value="Phospholipase D/nuclease"/>
    <property type="match status" value="2"/>
</dbReference>
<dbReference type="PROSITE" id="PS50035">
    <property type="entry name" value="PLD"/>
    <property type="match status" value="2"/>
</dbReference>